<comment type="subcellular location">
    <subcellularLocation>
        <location evidence="1">Cell membrane</location>
        <topology evidence="1">Lipid-anchor</topology>
    </subcellularLocation>
</comment>
<comment type="similarity">
    <text evidence="2">Belongs to the staphylococcal tandem lipoprotein family.</text>
</comment>
<accession>Q5HKA2</accession>
<name>Y2447_STAEQ</name>
<feature type="signal peptide" evidence="1">
    <location>
        <begin position="1"/>
        <end position="19"/>
    </location>
</feature>
<feature type="chain" id="PRO_0000282187" description="Uncharacterized lipoprotein SERP2447">
    <location>
        <begin position="20"/>
        <end position="253"/>
    </location>
</feature>
<feature type="lipid moiety-binding region" description="N-palmitoyl cysteine" evidence="1">
    <location>
        <position position="20"/>
    </location>
</feature>
<feature type="lipid moiety-binding region" description="S-diacylglycerol cysteine" evidence="1">
    <location>
        <position position="20"/>
    </location>
</feature>
<proteinExistence type="inferred from homology"/>
<evidence type="ECO:0000255" key="1">
    <source>
        <dbReference type="PROSITE-ProRule" id="PRU00303"/>
    </source>
</evidence>
<evidence type="ECO:0000305" key="2"/>
<dbReference type="EMBL" id="CP000029">
    <property type="protein sequence ID" value="AAW53310.1"/>
    <property type="molecule type" value="Genomic_DNA"/>
</dbReference>
<dbReference type="RefSeq" id="WP_002486019.1">
    <property type="nucleotide sequence ID" value="NC_002976.3"/>
</dbReference>
<dbReference type="SMR" id="Q5HKA2"/>
<dbReference type="STRING" id="176279.SERP2447"/>
<dbReference type="KEGG" id="ser:SERP2447"/>
<dbReference type="eggNOG" id="ENOG5033UD8">
    <property type="taxonomic scope" value="Bacteria"/>
</dbReference>
<dbReference type="HOGENOM" id="CLU_071589_0_1_9"/>
<dbReference type="Proteomes" id="UP000000531">
    <property type="component" value="Chromosome"/>
</dbReference>
<dbReference type="GO" id="GO:0005886">
    <property type="term" value="C:plasma membrane"/>
    <property type="evidence" value="ECO:0007669"/>
    <property type="project" value="UniProtKB-SubCell"/>
</dbReference>
<dbReference type="Gene3D" id="2.50.20.40">
    <property type="match status" value="1"/>
</dbReference>
<dbReference type="InterPro" id="IPR007595">
    <property type="entry name" value="Csa"/>
</dbReference>
<dbReference type="InterPro" id="IPR038641">
    <property type="entry name" value="Csa_sf"/>
</dbReference>
<dbReference type="NCBIfam" id="TIGR01742">
    <property type="entry name" value="SA_tandem_lipo"/>
    <property type="match status" value="1"/>
</dbReference>
<dbReference type="Pfam" id="PF04507">
    <property type="entry name" value="DUF576"/>
    <property type="match status" value="1"/>
</dbReference>
<dbReference type="PROSITE" id="PS51257">
    <property type="entry name" value="PROKAR_LIPOPROTEIN"/>
    <property type="match status" value="1"/>
</dbReference>
<protein>
    <recommendedName>
        <fullName>Uncharacterized lipoprotein SERP2447</fullName>
    </recommendedName>
</protein>
<reference key="1">
    <citation type="journal article" date="2005" name="J. Bacteriol.">
        <title>Insights on evolution of virulence and resistance from the complete genome analysis of an early methicillin-resistant Staphylococcus aureus strain and a biofilm-producing methicillin-resistant Staphylococcus epidermidis strain.</title>
        <authorList>
            <person name="Gill S.R."/>
            <person name="Fouts D.E."/>
            <person name="Archer G.L."/>
            <person name="Mongodin E.F."/>
            <person name="DeBoy R.T."/>
            <person name="Ravel J."/>
            <person name="Paulsen I.T."/>
            <person name="Kolonay J.F."/>
            <person name="Brinkac L.M."/>
            <person name="Beanan M.J."/>
            <person name="Dodson R.J."/>
            <person name="Daugherty S.C."/>
            <person name="Madupu R."/>
            <person name="Angiuoli S.V."/>
            <person name="Durkin A.S."/>
            <person name="Haft D.H."/>
            <person name="Vamathevan J.J."/>
            <person name="Khouri H."/>
            <person name="Utterback T.R."/>
            <person name="Lee C."/>
            <person name="Dimitrov G."/>
            <person name="Jiang L."/>
            <person name="Qin H."/>
            <person name="Weidman J."/>
            <person name="Tran K."/>
            <person name="Kang K.H."/>
            <person name="Hance I.R."/>
            <person name="Nelson K.E."/>
            <person name="Fraser C.M."/>
        </authorList>
    </citation>
    <scope>NUCLEOTIDE SEQUENCE [LARGE SCALE GENOMIC DNA]</scope>
    <source>
        <strain>ATCC 35984 / DSM 28319 / BCRC 17069 / CCUG 31568 / BM 3577 / RP62A</strain>
    </source>
</reference>
<gene>
    <name type="ordered locus">SERP2447</name>
</gene>
<sequence length="253" mass="29707">MHYLKKVTIYISLLILVSGCGDSKETEIKQNFNKMLNVYPTKNLEDFYDKEGYRDEEFDKDDKGTWIIRSEMTKQPKGKIMTSKGMVLHMNRNTRSTTGYYVIRKISEDNKSEIDDEEKKYPIKMVNNKIIPTQKINDNKLKNEIENFKFFVQYGSFKNSDDYKEGDIEYNPNAPNYSAQYHLSNDDYNIKQLRKRYDIKTKKTPRLLMRGAGDPKGSSVGYKNLEFTFVKNNEENIYFTDSINFNPSKGKSL</sequence>
<keyword id="KW-1003">Cell membrane</keyword>
<keyword id="KW-0449">Lipoprotein</keyword>
<keyword id="KW-0472">Membrane</keyword>
<keyword id="KW-0564">Palmitate</keyword>
<keyword id="KW-1185">Reference proteome</keyword>
<keyword id="KW-0732">Signal</keyword>
<organism>
    <name type="scientific">Staphylococcus epidermidis (strain ATCC 35984 / DSM 28319 / BCRC 17069 / CCUG 31568 / BM 3577 / RP62A)</name>
    <dbReference type="NCBI Taxonomy" id="176279"/>
    <lineage>
        <taxon>Bacteria</taxon>
        <taxon>Bacillati</taxon>
        <taxon>Bacillota</taxon>
        <taxon>Bacilli</taxon>
        <taxon>Bacillales</taxon>
        <taxon>Staphylococcaceae</taxon>
        <taxon>Staphylococcus</taxon>
    </lineage>
</organism>